<sequence>MTNIRKTHPLMKIVNNAFIDLPAPSNISSWWNFGSLLGVCLILQILTGLFLAMHYTSDTMTAFSSVTHICRDVNYGWIIRYMHANGASMFFICLFMHVGRGLYYGSYTFLETWNIGVILLFTVMATAFVGYVLPWGQMSFWGATVITNLLSAIPYIGTNLVEWIWGGFSVDKATLTRFFAFHFILPFIIAALAMVHLLFLHETGSNNPTGIPSDADKIPFHPYYTIKDILGILLLILFLMLLVLFAPDLLGDPDNYTPANPLNTPPHIKPEWYFLFAYAILRSIPNKLGGVLALISSILILILMPLLHTSKQRSMMFRPFSQCLFWILVADLLTLTWIGGQPVEYPFIIIGQLASILYFFIILVLMPVTSTIENNLLKW</sequence>
<reference key="1">
    <citation type="submission" date="2002-10" db="EMBL/GenBank/DDBJ databases">
        <title>Phylogenetic relationships of Cervinae based on sequence of mitochondrial cytochrome b gene.</title>
        <authorList>
            <person name="Liu X."/>
            <person name="Wang Y."/>
            <person name="Liu Z."/>
        </authorList>
    </citation>
    <scope>NUCLEOTIDE SEQUENCE [GENOMIC DNA]</scope>
</reference>
<gene>
    <name type="primary">MT-CYB</name>
    <name type="synonym">COB</name>
    <name type="synonym">CYTB</name>
    <name type="synonym">MTCYB</name>
</gene>
<protein>
    <recommendedName>
        <fullName>Cytochrome b</fullName>
    </recommendedName>
    <alternativeName>
        <fullName>Complex III subunit 3</fullName>
    </alternativeName>
    <alternativeName>
        <fullName>Complex III subunit III</fullName>
    </alternativeName>
    <alternativeName>
        <fullName>Cytochrome b-c1 complex subunit 3</fullName>
    </alternativeName>
    <alternativeName>
        <fullName>Ubiquinol-cytochrome-c reductase complex cytochrome b subunit</fullName>
    </alternativeName>
</protein>
<evidence type="ECO:0000250" key="1"/>
<evidence type="ECO:0000250" key="2">
    <source>
        <dbReference type="UniProtKB" id="P00157"/>
    </source>
</evidence>
<evidence type="ECO:0000255" key="3">
    <source>
        <dbReference type="PROSITE-ProRule" id="PRU00967"/>
    </source>
</evidence>
<evidence type="ECO:0000255" key="4">
    <source>
        <dbReference type="PROSITE-ProRule" id="PRU00968"/>
    </source>
</evidence>
<geneLocation type="mitochondrion"/>
<keyword id="KW-0249">Electron transport</keyword>
<keyword id="KW-0349">Heme</keyword>
<keyword id="KW-0408">Iron</keyword>
<keyword id="KW-0472">Membrane</keyword>
<keyword id="KW-0479">Metal-binding</keyword>
<keyword id="KW-0496">Mitochondrion</keyword>
<keyword id="KW-0999">Mitochondrion inner membrane</keyword>
<keyword id="KW-0679">Respiratory chain</keyword>
<keyword id="KW-0812">Transmembrane</keyword>
<keyword id="KW-1133">Transmembrane helix</keyword>
<keyword id="KW-0813">Transport</keyword>
<keyword id="KW-0830">Ubiquinone</keyword>
<name>CYB_RUCEL</name>
<proteinExistence type="inferred from homology"/>
<accession>Q8HEM1</accession>
<organism>
    <name type="scientific">Rucervus eldii</name>
    <name type="common">Eld's deer</name>
    <name type="synonym">Cervus eldii</name>
    <dbReference type="NCBI Taxonomy" id="1088090"/>
    <lineage>
        <taxon>Eukaryota</taxon>
        <taxon>Metazoa</taxon>
        <taxon>Chordata</taxon>
        <taxon>Craniata</taxon>
        <taxon>Vertebrata</taxon>
        <taxon>Euteleostomi</taxon>
        <taxon>Mammalia</taxon>
        <taxon>Eutheria</taxon>
        <taxon>Laurasiatheria</taxon>
        <taxon>Artiodactyla</taxon>
        <taxon>Ruminantia</taxon>
        <taxon>Pecora</taxon>
        <taxon>Cervidae</taxon>
        <taxon>Cervinae</taxon>
        <taxon>Rucervus</taxon>
    </lineage>
</organism>
<dbReference type="EMBL" id="AY157735">
    <property type="protein sequence ID" value="AAN76337.1"/>
    <property type="molecule type" value="Genomic_DNA"/>
</dbReference>
<dbReference type="SMR" id="Q8HEM1"/>
<dbReference type="GO" id="GO:0005743">
    <property type="term" value="C:mitochondrial inner membrane"/>
    <property type="evidence" value="ECO:0007669"/>
    <property type="project" value="UniProtKB-SubCell"/>
</dbReference>
<dbReference type="GO" id="GO:0045275">
    <property type="term" value="C:respiratory chain complex III"/>
    <property type="evidence" value="ECO:0007669"/>
    <property type="project" value="InterPro"/>
</dbReference>
<dbReference type="GO" id="GO:0046872">
    <property type="term" value="F:metal ion binding"/>
    <property type="evidence" value="ECO:0007669"/>
    <property type="project" value="UniProtKB-KW"/>
</dbReference>
<dbReference type="GO" id="GO:0008121">
    <property type="term" value="F:ubiquinol-cytochrome-c reductase activity"/>
    <property type="evidence" value="ECO:0007669"/>
    <property type="project" value="InterPro"/>
</dbReference>
<dbReference type="GO" id="GO:0006122">
    <property type="term" value="P:mitochondrial electron transport, ubiquinol to cytochrome c"/>
    <property type="evidence" value="ECO:0007669"/>
    <property type="project" value="TreeGrafter"/>
</dbReference>
<dbReference type="CDD" id="cd00290">
    <property type="entry name" value="cytochrome_b_C"/>
    <property type="match status" value="1"/>
</dbReference>
<dbReference type="CDD" id="cd00284">
    <property type="entry name" value="Cytochrome_b_N"/>
    <property type="match status" value="1"/>
</dbReference>
<dbReference type="FunFam" id="1.20.810.10:FF:000002">
    <property type="entry name" value="Cytochrome b"/>
    <property type="match status" value="1"/>
</dbReference>
<dbReference type="Gene3D" id="1.20.810.10">
    <property type="entry name" value="Cytochrome Bc1 Complex, Chain C"/>
    <property type="match status" value="1"/>
</dbReference>
<dbReference type="InterPro" id="IPR005798">
    <property type="entry name" value="Cyt_b/b6_C"/>
</dbReference>
<dbReference type="InterPro" id="IPR036150">
    <property type="entry name" value="Cyt_b/b6_C_sf"/>
</dbReference>
<dbReference type="InterPro" id="IPR005797">
    <property type="entry name" value="Cyt_b/b6_N"/>
</dbReference>
<dbReference type="InterPro" id="IPR027387">
    <property type="entry name" value="Cytb/b6-like_sf"/>
</dbReference>
<dbReference type="InterPro" id="IPR030689">
    <property type="entry name" value="Cytochrome_b"/>
</dbReference>
<dbReference type="InterPro" id="IPR048260">
    <property type="entry name" value="Cytochrome_b_C_euk/bac"/>
</dbReference>
<dbReference type="InterPro" id="IPR048259">
    <property type="entry name" value="Cytochrome_b_N_euk/bac"/>
</dbReference>
<dbReference type="InterPro" id="IPR016174">
    <property type="entry name" value="Di-haem_cyt_TM"/>
</dbReference>
<dbReference type="PANTHER" id="PTHR19271">
    <property type="entry name" value="CYTOCHROME B"/>
    <property type="match status" value="1"/>
</dbReference>
<dbReference type="PANTHER" id="PTHR19271:SF16">
    <property type="entry name" value="CYTOCHROME B"/>
    <property type="match status" value="1"/>
</dbReference>
<dbReference type="Pfam" id="PF00032">
    <property type="entry name" value="Cytochrom_B_C"/>
    <property type="match status" value="1"/>
</dbReference>
<dbReference type="Pfam" id="PF00033">
    <property type="entry name" value="Cytochrome_B"/>
    <property type="match status" value="1"/>
</dbReference>
<dbReference type="PIRSF" id="PIRSF038885">
    <property type="entry name" value="COB"/>
    <property type="match status" value="1"/>
</dbReference>
<dbReference type="SUPFAM" id="SSF81648">
    <property type="entry name" value="a domain/subunit of cytochrome bc1 complex (Ubiquinol-cytochrome c reductase)"/>
    <property type="match status" value="1"/>
</dbReference>
<dbReference type="SUPFAM" id="SSF81342">
    <property type="entry name" value="Transmembrane di-heme cytochromes"/>
    <property type="match status" value="1"/>
</dbReference>
<dbReference type="PROSITE" id="PS51003">
    <property type="entry name" value="CYTB_CTER"/>
    <property type="match status" value="1"/>
</dbReference>
<dbReference type="PROSITE" id="PS51002">
    <property type="entry name" value="CYTB_NTER"/>
    <property type="match status" value="1"/>
</dbReference>
<comment type="function">
    <text evidence="2">Component of the ubiquinol-cytochrome c reductase complex (complex III or cytochrome b-c1 complex) that is part of the mitochondrial respiratory chain. The b-c1 complex mediates electron transfer from ubiquinol to cytochrome c. Contributes to the generation of a proton gradient across the mitochondrial membrane that is then used for ATP synthesis.</text>
</comment>
<comment type="cofactor">
    <cofactor evidence="2">
        <name>heme b</name>
        <dbReference type="ChEBI" id="CHEBI:60344"/>
    </cofactor>
    <text evidence="2">Binds 2 heme b groups non-covalently.</text>
</comment>
<comment type="subunit">
    <text evidence="2">The cytochrome bc1 complex contains 11 subunits: 3 respiratory subunits (MT-CYB, CYC1 and UQCRFS1), 2 core proteins (UQCRC1 and UQCRC2) and 6 low-molecular weight proteins (UQCRH/QCR6, UQCRB/QCR7, UQCRQ/QCR8, UQCR10/QCR9, UQCR11/QCR10 and a cleavage product of UQCRFS1). This cytochrome bc1 complex then forms a dimer.</text>
</comment>
<comment type="subcellular location">
    <subcellularLocation>
        <location evidence="2">Mitochondrion inner membrane</location>
        <topology evidence="2">Multi-pass membrane protein</topology>
    </subcellularLocation>
</comment>
<comment type="miscellaneous">
    <text evidence="1">Heme 1 (or BL or b562) is low-potential and absorbs at about 562 nm, and heme 2 (or BH or b566) is high-potential and absorbs at about 566 nm.</text>
</comment>
<comment type="similarity">
    <text evidence="3 4">Belongs to the cytochrome b family.</text>
</comment>
<comment type="caution">
    <text evidence="2">The full-length protein contains only eight transmembrane helices, not nine as predicted by bioinformatics tools.</text>
</comment>
<feature type="chain" id="PRO_0000254677" description="Cytochrome b">
    <location>
        <begin position="1"/>
        <end position="379"/>
    </location>
</feature>
<feature type="transmembrane region" description="Helical" evidence="2">
    <location>
        <begin position="33"/>
        <end position="53"/>
    </location>
</feature>
<feature type="transmembrane region" description="Helical" evidence="2">
    <location>
        <begin position="77"/>
        <end position="98"/>
    </location>
</feature>
<feature type="transmembrane region" description="Helical" evidence="2">
    <location>
        <begin position="113"/>
        <end position="133"/>
    </location>
</feature>
<feature type="transmembrane region" description="Helical" evidence="2">
    <location>
        <begin position="178"/>
        <end position="198"/>
    </location>
</feature>
<feature type="transmembrane region" description="Helical" evidence="2">
    <location>
        <begin position="226"/>
        <end position="246"/>
    </location>
</feature>
<feature type="transmembrane region" description="Helical" evidence="2">
    <location>
        <begin position="288"/>
        <end position="308"/>
    </location>
</feature>
<feature type="transmembrane region" description="Helical" evidence="2">
    <location>
        <begin position="320"/>
        <end position="340"/>
    </location>
</feature>
<feature type="transmembrane region" description="Helical" evidence="2">
    <location>
        <begin position="347"/>
        <end position="367"/>
    </location>
</feature>
<feature type="binding site" description="axial binding residue" evidence="2">
    <location>
        <position position="83"/>
    </location>
    <ligand>
        <name>heme b</name>
        <dbReference type="ChEBI" id="CHEBI:60344"/>
        <label>b562</label>
    </ligand>
    <ligandPart>
        <name>Fe</name>
        <dbReference type="ChEBI" id="CHEBI:18248"/>
    </ligandPart>
</feature>
<feature type="binding site" description="axial binding residue" evidence="2">
    <location>
        <position position="97"/>
    </location>
    <ligand>
        <name>heme b</name>
        <dbReference type="ChEBI" id="CHEBI:60344"/>
        <label>b566</label>
    </ligand>
    <ligandPart>
        <name>Fe</name>
        <dbReference type="ChEBI" id="CHEBI:18248"/>
    </ligandPart>
</feature>
<feature type="binding site" description="axial binding residue" evidence="2">
    <location>
        <position position="182"/>
    </location>
    <ligand>
        <name>heme b</name>
        <dbReference type="ChEBI" id="CHEBI:60344"/>
        <label>b562</label>
    </ligand>
    <ligandPart>
        <name>Fe</name>
        <dbReference type="ChEBI" id="CHEBI:18248"/>
    </ligandPart>
</feature>
<feature type="binding site" description="axial binding residue" evidence="2">
    <location>
        <position position="196"/>
    </location>
    <ligand>
        <name>heme b</name>
        <dbReference type="ChEBI" id="CHEBI:60344"/>
        <label>b566</label>
    </ligand>
    <ligandPart>
        <name>Fe</name>
        <dbReference type="ChEBI" id="CHEBI:18248"/>
    </ligandPart>
</feature>
<feature type="binding site" evidence="2">
    <location>
        <position position="201"/>
    </location>
    <ligand>
        <name>a ubiquinone</name>
        <dbReference type="ChEBI" id="CHEBI:16389"/>
    </ligand>
</feature>